<evidence type="ECO:0000255" key="1">
    <source>
        <dbReference type="HAMAP-Rule" id="MF_00600"/>
    </source>
</evidence>
<feature type="chain" id="PRO_0000331986" description="Chaperonin GroEL 3">
    <location>
        <begin position="1"/>
        <end position="540"/>
    </location>
</feature>
<feature type="binding site" evidence="1">
    <location>
        <begin position="30"/>
        <end position="33"/>
    </location>
    <ligand>
        <name>ATP</name>
        <dbReference type="ChEBI" id="CHEBI:30616"/>
    </ligand>
</feature>
<feature type="binding site" evidence="1">
    <location>
        <position position="51"/>
    </location>
    <ligand>
        <name>ATP</name>
        <dbReference type="ChEBI" id="CHEBI:30616"/>
    </ligand>
</feature>
<feature type="binding site" evidence="1">
    <location>
        <begin position="87"/>
        <end position="91"/>
    </location>
    <ligand>
        <name>ATP</name>
        <dbReference type="ChEBI" id="CHEBI:30616"/>
    </ligand>
</feature>
<feature type="binding site" evidence="1">
    <location>
        <position position="415"/>
    </location>
    <ligand>
        <name>ATP</name>
        <dbReference type="ChEBI" id="CHEBI:30616"/>
    </ligand>
</feature>
<feature type="binding site" evidence="1">
    <location>
        <begin position="479"/>
        <end position="481"/>
    </location>
    <ligand>
        <name>ATP</name>
        <dbReference type="ChEBI" id="CHEBI:30616"/>
    </ligand>
</feature>
<feature type="binding site" evidence="1">
    <location>
        <position position="495"/>
    </location>
    <ligand>
        <name>ATP</name>
        <dbReference type="ChEBI" id="CHEBI:30616"/>
    </ligand>
</feature>
<gene>
    <name evidence="1" type="primary">groEL3</name>
    <name evidence="1" type="synonym">groL3</name>
    <name type="ordered locus">Bamb_6392</name>
</gene>
<reference key="1">
    <citation type="submission" date="2006-08" db="EMBL/GenBank/DDBJ databases">
        <title>Complete sequence of chromosome 3 of Burkholderia cepacia AMMD.</title>
        <authorList>
            <person name="Copeland A."/>
            <person name="Lucas S."/>
            <person name="Lapidus A."/>
            <person name="Barry K."/>
            <person name="Detter J.C."/>
            <person name="Glavina del Rio T."/>
            <person name="Hammon N."/>
            <person name="Israni S."/>
            <person name="Pitluck S."/>
            <person name="Bruce D."/>
            <person name="Chain P."/>
            <person name="Malfatti S."/>
            <person name="Shin M."/>
            <person name="Vergez L."/>
            <person name="Schmutz J."/>
            <person name="Larimer F."/>
            <person name="Land M."/>
            <person name="Hauser L."/>
            <person name="Kyrpides N."/>
            <person name="Kim E."/>
            <person name="Parke J."/>
            <person name="Coenye T."/>
            <person name="Konstantinidis K."/>
            <person name="Ramette A."/>
            <person name="Tiedje J."/>
            <person name="Richardson P."/>
        </authorList>
    </citation>
    <scope>NUCLEOTIDE SEQUENCE [LARGE SCALE GENOMIC DNA]</scope>
    <source>
        <strain>ATCC BAA-244 / DSM 16087 / CCUG 44356 / LMG 19182 / AMMD</strain>
    </source>
</reference>
<sequence>MSAKDVKFHDSARARIVKGVNVLADAVKVTLGPKGRNVVIERSFGAPTITKDGVSVAKEIELKDRFENMGAQIVKQVASKTADVAGDGTTTATVLAQAIVQEGMKHVAAGMNPMDLKRGIDKAVAAVLDELRKLSKPISTNREIAQVGSISANADEAIGKIIADAMEKVGKEGVITVEDGKSLENELDVVEGMQFDRGYVSPYFINDPEKQAAYLDDALILLHDKKISNIRDLLPVLEATSKAGKPLLIVAEDIDGEALATLVVNAMRGILKVAAVKAPGFGDRRKAMLEDIAILTGATVISEETGKQLQKASLEDLGSAKRVEVRKEDTIIIDGAGDQERIEARVKSIRTQIDETTSDYDREKLQERVAKLAGGVAVIKVGAATEVEMKEKKDRVDDALHATRAAVEEGIVPGGGVALLRARSTATSLKGANSDQDAGIQIVLRALEAPLRVIASNAGDEPSVVIAKVLEGKGNFGYNAATGEYGDLVEAGVVDPTKVTRTALQNAASIAGLILTTDATVADAPKDEKPAQAPAPELEY</sequence>
<accession>Q0B1N7</accession>
<keyword id="KW-0067">ATP-binding</keyword>
<keyword id="KW-0143">Chaperone</keyword>
<keyword id="KW-0963">Cytoplasm</keyword>
<keyword id="KW-0413">Isomerase</keyword>
<keyword id="KW-0547">Nucleotide-binding</keyword>
<dbReference type="EC" id="5.6.1.7" evidence="1"/>
<dbReference type="EMBL" id="CP000442">
    <property type="protein sequence ID" value="ABI91936.1"/>
    <property type="molecule type" value="Genomic_DNA"/>
</dbReference>
<dbReference type="RefSeq" id="WP_011661263.1">
    <property type="nucleotide sequence ID" value="NC_008392.1"/>
</dbReference>
<dbReference type="SMR" id="Q0B1N7"/>
<dbReference type="GeneID" id="93088710"/>
<dbReference type="KEGG" id="bam:Bamb_6392"/>
<dbReference type="PATRIC" id="fig|339670.21.peg.6280"/>
<dbReference type="eggNOG" id="COG0459">
    <property type="taxonomic scope" value="Bacteria"/>
</dbReference>
<dbReference type="Proteomes" id="UP000000662">
    <property type="component" value="Chromosome 3"/>
</dbReference>
<dbReference type="GO" id="GO:0005737">
    <property type="term" value="C:cytoplasm"/>
    <property type="evidence" value="ECO:0007669"/>
    <property type="project" value="UniProtKB-SubCell"/>
</dbReference>
<dbReference type="GO" id="GO:0005524">
    <property type="term" value="F:ATP binding"/>
    <property type="evidence" value="ECO:0007669"/>
    <property type="project" value="UniProtKB-UniRule"/>
</dbReference>
<dbReference type="GO" id="GO:0140662">
    <property type="term" value="F:ATP-dependent protein folding chaperone"/>
    <property type="evidence" value="ECO:0007669"/>
    <property type="project" value="InterPro"/>
</dbReference>
<dbReference type="GO" id="GO:0016853">
    <property type="term" value="F:isomerase activity"/>
    <property type="evidence" value="ECO:0007669"/>
    <property type="project" value="UniProtKB-KW"/>
</dbReference>
<dbReference type="GO" id="GO:0051082">
    <property type="term" value="F:unfolded protein binding"/>
    <property type="evidence" value="ECO:0007669"/>
    <property type="project" value="UniProtKB-UniRule"/>
</dbReference>
<dbReference type="GO" id="GO:0042026">
    <property type="term" value="P:protein refolding"/>
    <property type="evidence" value="ECO:0007669"/>
    <property type="project" value="UniProtKB-UniRule"/>
</dbReference>
<dbReference type="CDD" id="cd03344">
    <property type="entry name" value="GroEL"/>
    <property type="match status" value="1"/>
</dbReference>
<dbReference type="FunFam" id="1.10.560.10:FF:000001">
    <property type="entry name" value="60 kDa chaperonin"/>
    <property type="match status" value="1"/>
</dbReference>
<dbReference type="FunFam" id="3.50.7.10:FF:000001">
    <property type="entry name" value="60 kDa chaperonin"/>
    <property type="match status" value="1"/>
</dbReference>
<dbReference type="Gene3D" id="3.50.7.10">
    <property type="entry name" value="GroEL"/>
    <property type="match status" value="1"/>
</dbReference>
<dbReference type="Gene3D" id="1.10.560.10">
    <property type="entry name" value="GroEL-like equatorial domain"/>
    <property type="match status" value="1"/>
</dbReference>
<dbReference type="Gene3D" id="3.30.260.10">
    <property type="entry name" value="TCP-1-like chaperonin intermediate domain"/>
    <property type="match status" value="1"/>
</dbReference>
<dbReference type="HAMAP" id="MF_00600">
    <property type="entry name" value="CH60"/>
    <property type="match status" value="1"/>
</dbReference>
<dbReference type="InterPro" id="IPR018370">
    <property type="entry name" value="Chaperonin_Cpn60_CS"/>
</dbReference>
<dbReference type="InterPro" id="IPR001844">
    <property type="entry name" value="Cpn60/GroEL"/>
</dbReference>
<dbReference type="InterPro" id="IPR002423">
    <property type="entry name" value="Cpn60/GroEL/TCP-1"/>
</dbReference>
<dbReference type="InterPro" id="IPR027409">
    <property type="entry name" value="GroEL-like_apical_dom_sf"/>
</dbReference>
<dbReference type="InterPro" id="IPR027413">
    <property type="entry name" value="GROEL-like_equatorial_sf"/>
</dbReference>
<dbReference type="InterPro" id="IPR027410">
    <property type="entry name" value="TCP-1-like_intermed_sf"/>
</dbReference>
<dbReference type="NCBIfam" id="TIGR02348">
    <property type="entry name" value="GroEL"/>
    <property type="match status" value="1"/>
</dbReference>
<dbReference type="NCBIfam" id="NF000592">
    <property type="entry name" value="PRK00013.1"/>
    <property type="match status" value="1"/>
</dbReference>
<dbReference type="NCBIfam" id="NF009487">
    <property type="entry name" value="PRK12849.1"/>
    <property type="match status" value="1"/>
</dbReference>
<dbReference type="NCBIfam" id="NF009488">
    <property type="entry name" value="PRK12850.1"/>
    <property type="match status" value="1"/>
</dbReference>
<dbReference type="NCBIfam" id="NF009489">
    <property type="entry name" value="PRK12851.1"/>
    <property type="match status" value="1"/>
</dbReference>
<dbReference type="PANTHER" id="PTHR45633">
    <property type="entry name" value="60 KDA HEAT SHOCK PROTEIN, MITOCHONDRIAL"/>
    <property type="match status" value="1"/>
</dbReference>
<dbReference type="Pfam" id="PF00118">
    <property type="entry name" value="Cpn60_TCP1"/>
    <property type="match status" value="1"/>
</dbReference>
<dbReference type="PRINTS" id="PR00298">
    <property type="entry name" value="CHAPERONIN60"/>
</dbReference>
<dbReference type="SUPFAM" id="SSF52029">
    <property type="entry name" value="GroEL apical domain-like"/>
    <property type="match status" value="1"/>
</dbReference>
<dbReference type="SUPFAM" id="SSF48592">
    <property type="entry name" value="GroEL equatorial domain-like"/>
    <property type="match status" value="1"/>
</dbReference>
<dbReference type="SUPFAM" id="SSF54849">
    <property type="entry name" value="GroEL-intermediate domain like"/>
    <property type="match status" value="1"/>
</dbReference>
<dbReference type="PROSITE" id="PS00296">
    <property type="entry name" value="CHAPERONINS_CPN60"/>
    <property type="match status" value="1"/>
</dbReference>
<name>CH603_BURCM</name>
<organism>
    <name type="scientific">Burkholderia ambifaria (strain ATCC BAA-244 / DSM 16087 / CCUG 44356 / LMG 19182 / AMMD)</name>
    <name type="common">Burkholderia cepacia (strain AMMD)</name>
    <dbReference type="NCBI Taxonomy" id="339670"/>
    <lineage>
        <taxon>Bacteria</taxon>
        <taxon>Pseudomonadati</taxon>
        <taxon>Pseudomonadota</taxon>
        <taxon>Betaproteobacteria</taxon>
        <taxon>Burkholderiales</taxon>
        <taxon>Burkholderiaceae</taxon>
        <taxon>Burkholderia</taxon>
        <taxon>Burkholderia cepacia complex</taxon>
    </lineage>
</organism>
<protein>
    <recommendedName>
        <fullName evidence="1">Chaperonin GroEL 3</fullName>
        <ecNumber evidence="1">5.6.1.7</ecNumber>
    </recommendedName>
    <alternativeName>
        <fullName evidence="1">60 kDa chaperonin 3</fullName>
    </alternativeName>
    <alternativeName>
        <fullName evidence="1">Chaperonin-60 3</fullName>
        <shortName evidence="1">Cpn60 3</shortName>
    </alternativeName>
</protein>
<proteinExistence type="inferred from homology"/>
<comment type="function">
    <text evidence="1">Together with its co-chaperonin GroES, plays an essential role in assisting protein folding. The GroEL-GroES system forms a nano-cage that allows encapsulation of the non-native substrate proteins and provides a physical environment optimized to promote and accelerate protein folding.</text>
</comment>
<comment type="catalytic activity">
    <reaction evidence="1">
        <text>ATP + H2O + a folded polypeptide = ADP + phosphate + an unfolded polypeptide.</text>
        <dbReference type="EC" id="5.6.1.7"/>
    </reaction>
</comment>
<comment type="subunit">
    <text evidence="1">Forms a cylinder of 14 subunits composed of two heptameric rings stacked back-to-back. Interacts with the co-chaperonin GroES.</text>
</comment>
<comment type="subcellular location">
    <subcellularLocation>
        <location evidence="1">Cytoplasm</location>
    </subcellularLocation>
</comment>
<comment type="similarity">
    <text evidence="1">Belongs to the chaperonin (HSP60) family.</text>
</comment>